<protein>
    <recommendedName>
        <fullName evidence="1">Nucleotide-binding protein Pro_0479</fullName>
    </recommendedName>
</protein>
<dbReference type="EMBL" id="AE017126">
    <property type="protein sequence ID" value="AAP99524.1"/>
    <property type="molecule type" value="Genomic_DNA"/>
</dbReference>
<dbReference type="RefSeq" id="NP_874872.1">
    <property type="nucleotide sequence ID" value="NC_005042.1"/>
</dbReference>
<dbReference type="RefSeq" id="WP_011124633.1">
    <property type="nucleotide sequence ID" value="NC_005042.1"/>
</dbReference>
<dbReference type="SMR" id="Q7VDA4"/>
<dbReference type="STRING" id="167539.Pro_0479"/>
<dbReference type="EnsemblBacteria" id="AAP99524">
    <property type="protein sequence ID" value="AAP99524"/>
    <property type="gene ID" value="Pro_0479"/>
</dbReference>
<dbReference type="KEGG" id="pma:Pro_0479"/>
<dbReference type="PATRIC" id="fig|167539.5.peg.492"/>
<dbReference type="eggNOG" id="COG1666">
    <property type="taxonomic scope" value="Bacteria"/>
</dbReference>
<dbReference type="HOGENOM" id="CLU_099839_0_0_3"/>
<dbReference type="OrthoDB" id="9801447at2"/>
<dbReference type="Proteomes" id="UP000001420">
    <property type="component" value="Chromosome"/>
</dbReference>
<dbReference type="GO" id="GO:0005829">
    <property type="term" value="C:cytosol"/>
    <property type="evidence" value="ECO:0007669"/>
    <property type="project" value="TreeGrafter"/>
</dbReference>
<dbReference type="GO" id="GO:0000166">
    <property type="term" value="F:nucleotide binding"/>
    <property type="evidence" value="ECO:0007669"/>
    <property type="project" value="TreeGrafter"/>
</dbReference>
<dbReference type="CDD" id="cd11740">
    <property type="entry name" value="YajQ_like"/>
    <property type="match status" value="1"/>
</dbReference>
<dbReference type="Gene3D" id="3.30.70.860">
    <property type="match status" value="1"/>
</dbReference>
<dbReference type="Gene3D" id="3.30.70.990">
    <property type="entry name" value="YajQ-like, domain 2"/>
    <property type="match status" value="1"/>
</dbReference>
<dbReference type="HAMAP" id="MF_00632">
    <property type="entry name" value="YajQ"/>
    <property type="match status" value="1"/>
</dbReference>
<dbReference type="InterPro" id="IPR007551">
    <property type="entry name" value="DUF520"/>
</dbReference>
<dbReference type="InterPro" id="IPR035571">
    <property type="entry name" value="UPF0234-like_C"/>
</dbReference>
<dbReference type="InterPro" id="IPR035570">
    <property type="entry name" value="UPF0234_N"/>
</dbReference>
<dbReference type="InterPro" id="IPR036183">
    <property type="entry name" value="YajQ-like_sf"/>
</dbReference>
<dbReference type="NCBIfam" id="NF003819">
    <property type="entry name" value="PRK05412.1"/>
    <property type="match status" value="1"/>
</dbReference>
<dbReference type="PANTHER" id="PTHR30476">
    <property type="entry name" value="UPF0234 PROTEIN YAJQ"/>
    <property type="match status" value="1"/>
</dbReference>
<dbReference type="PANTHER" id="PTHR30476:SF0">
    <property type="entry name" value="UPF0234 PROTEIN YAJQ"/>
    <property type="match status" value="1"/>
</dbReference>
<dbReference type="Pfam" id="PF04461">
    <property type="entry name" value="DUF520"/>
    <property type="match status" value="1"/>
</dbReference>
<dbReference type="SUPFAM" id="SSF89963">
    <property type="entry name" value="YajQ-like"/>
    <property type="match status" value="2"/>
</dbReference>
<keyword id="KW-0547">Nucleotide-binding</keyword>
<keyword id="KW-1185">Reference proteome</keyword>
<comment type="function">
    <text evidence="1">Nucleotide-binding protein.</text>
</comment>
<comment type="similarity">
    <text evidence="1">Belongs to the YajQ family.</text>
</comment>
<accession>Q7VDA4</accession>
<reference key="1">
    <citation type="journal article" date="2003" name="Proc. Natl. Acad. Sci. U.S.A.">
        <title>Genome sequence of the cyanobacterium Prochlorococcus marinus SS120, a nearly minimal oxyphototrophic genome.</title>
        <authorList>
            <person name="Dufresne A."/>
            <person name="Salanoubat M."/>
            <person name="Partensky F."/>
            <person name="Artiguenave F."/>
            <person name="Axmann I.M."/>
            <person name="Barbe V."/>
            <person name="Duprat S."/>
            <person name="Galperin M.Y."/>
            <person name="Koonin E.V."/>
            <person name="Le Gall F."/>
            <person name="Makarova K.S."/>
            <person name="Ostrowski M."/>
            <person name="Oztas S."/>
            <person name="Robert C."/>
            <person name="Rogozin I.B."/>
            <person name="Scanlan D.J."/>
            <person name="Tandeau de Marsac N."/>
            <person name="Weissenbach J."/>
            <person name="Wincker P."/>
            <person name="Wolf Y.I."/>
            <person name="Hess W.R."/>
        </authorList>
    </citation>
    <scope>NUCLEOTIDE SEQUENCE [LARGE SCALE GENOMIC DNA]</scope>
    <source>
        <strain>SARG / CCMP1375 / SS120</strain>
    </source>
</reference>
<sequence length="165" mass="18760">MPASYSFDVVSDFDRQELVNTIDQVQREVSQRYDLKDSNTELNLVDEEIIIHTASDMTLKAVVDIVLQKATKRNLSLKIFDFQDPEASSGNRLKQVVLLKKGLAQDVAKKLSKSIRDQLKKVNVAIQGNSLRVTGKSKDDLQLAIEILRKQEDGLEIPLQFENYR</sequence>
<name>Y479_PROMA</name>
<organism>
    <name type="scientific">Prochlorococcus marinus (strain SARG / CCMP1375 / SS120)</name>
    <dbReference type="NCBI Taxonomy" id="167539"/>
    <lineage>
        <taxon>Bacteria</taxon>
        <taxon>Bacillati</taxon>
        <taxon>Cyanobacteriota</taxon>
        <taxon>Cyanophyceae</taxon>
        <taxon>Synechococcales</taxon>
        <taxon>Prochlorococcaceae</taxon>
        <taxon>Prochlorococcus</taxon>
    </lineage>
</organism>
<gene>
    <name type="ordered locus">Pro_0479</name>
</gene>
<proteinExistence type="inferred from homology"/>
<evidence type="ECO:0000255" key="1">
    <source>
        <dbReference type="HAMAP-Rule" id="MF_00632"/>
    </source>
</evidence>
<feature type="chain" id="PRO_1000147317" description="Nucleotide-binding protein Pro_0479">
    <location>
        <begin position="1"/>
        <end position="165"/>
    </location>
</feature>